<sequence>MVLFTLEDFAVFKATTLATRMHLIREQLDPKFAEAATVIVPLLQTDQQAIYSHIAKHQRRYRNPPPNTWVAFSTSSRGYKMVPHLALGFWDDRLFLWLSVLRESKPASRVLTGITAMATTLPGKWQVAGEHTDKAMLPLTSANLATVGARFQTIKKAEFLLGKVYLADDPIWADPVRLWQDIQQRVVALKPMFDQLVQNV</sequence>
<name>Y1417_LACCB</name>
<organism>
    <name type="scientific">Lacticaseibacillus casei (strain BL23)</name>
    <name type="common">Lactobacillus casei</name>
    <dbReference type="NCBI Taxonomy" id="543734"/>
    <lineage>
        <taxon>Bacteria</taxon>
        <taxon>Bacillati</taxon>
        <taxon>Bacillota</taxon>
        <taxon>Bacilli</taxon>
        <taxon>Lactobacillales</taxon>
        <taxon>Lactobacillaceae</taxon>
        <taxon>Lacticaseibacillus</taxon>
    </lineage>
</organism>
<dbReference type="EMBL" id="FM177140">
    <property type="protein sequence ID" value="CAQ66498.1"/>
    <property type="molecule type" value="Genomic_DNA"/>
</dbReference>
<dbReference type="SMR" id="B3WDP7"/>
<dbReference type="KEGG" id="lcb:LCABL_14170"/>
<dbReference type="HOGENOM" id="CLU_096059_0_0_9"/>
<dbReference type="Gene3D" id="3.30.930.20">
    <property type="entry name" value="Protein of unknown function DUF1054"/>
    <property type="match status" value="1"/>
</dbReference>
<dbReference type="HAMAP" id="MF_01851">
    <property type="entry name" value="UPF0637"/>
    <property type="match status" value="1"/>
</dbReference>
<dbReference type="InterPro" id="IPR009403">
    <property type="entry name" value="UPF0637"/>
</dbReference>
<dbReference type="InterPro" id="IPR053707">
    <property type="entry name" value="UPF0637_domain_sf"/>
</dbReference>
<dbReference type="Pfam" id="PF06335">
    <property type="entry name" value="DUF1054"/>
    <property type="match status" value="1"/>
</dbReference>
<dbReference type="SUPFAM" id="SSF142913">
    <property type="entry name" value="YktB/PF0168-like"/>
    <property type="match status" value="1"/>
</dbReference>
<gene>
    <name type="ordered locus">LCABL_14170</name>
</gene>
<protein>
    <recommendedName>
        <fullName evidence="1">UPF0637 protein LCABL_14170</fullName>
    </recommendedName>
</protein>
<comment type="similarity">
    <text evidence="1">Belongs to the UPF0637 family.</text>
</comment>
<feature type="chain" id="PRO_1000188673" description="UPF0637 protein LCABL_14170">
    <location>
        <begin position="1"/>
        <end position="200"/>
    </location>
</feature>
<reference key="1">
    <citation type="submission" date="2008-06" db="EMBL/GenBank/DDBJ databases">
        <title>Lactobacillus casei BL23 complete genome sequence.</title>
        <authorList>
            <person name="Maze A."/>
            <person name="Boel G."/>
            <person name="Bourand A."/>
            <person name="Loux V."/>
            <person name="Gibrat J.F."/>
            <person name="Zuniga M."/>
            <person name="Hartke A."/>
            <person name="Deutscher J."/>
        </authorList>
    </citation>
    <scope>NUCLEOTIDE SEQUENCE [LARGE SCALE GENOMIC DNA]</scope>
    <source>
        <strain>BL23</strain>
    </source>
</reference>
<proteinExistence type="inferred from homology"/>
<accession>B3WDP7</accession>
<evidence type="ECO:0000255" key="1">
    <source>
        <dbReference type="HAMAP-Rule" id="MF_01851"/>
    </source>
</evidence>